<keyword id="KW-0963">Cytoplasm</keyword>
<keyword id="KW-0255">Endonuclease</keyword>
<keyword id="KW-0378">Hydrolase</keyword>
<keyword id="KW-0460">Magnesium</keyword>
<keyword id="KW-0479">Metal-binding</keyword>
<keyword id="KW-0507">mRNA processing</keyword>
<keyword id="KW-0540">Nuclease</keyword>
<keyword id="KW-1185">Reference proteome</keyword>
<keyword id="KW-0694">RNA-binding</keyword>
<keyword id="KW-0698">rRNA processing</keyword>
<keyword id="KW-0699">rRNA-binding</keyword>
<keyword id="KW-0819">tRNA processing</keyword>
<dbReference type="EC" id="3.1.26.3" evidence="1"/>
<dbReference type="EMBL" id="AE015451">
    <property type="protein sequence ID" value="AAN67055.1"/>
    <property type="molecule type" value="Genomic_DNA"/>
</dbReference>
<dbReference type="RefSeq" id="NP_743591.1">
    <property type="nucleotide sequence ID" value="NC_002947.4"/>
</dbReference>
<dbReference type="RefSeq" id="WP_003252059.1">
    <property type="nucleotide sequence ID" value="NZ_CP169744.1"/>
</dbReference>
<dbReference type="SMR" id="Q88MY5"/>
<dbReference type="STRING" id="160488.PP_1433"/>
<dbReference type="PaxDb" id="160488-PP_1433"/>
<dbReference type="GeneID" id="83682032"/>
<dbReference type="KEGG" id="ppu:PP_1433"/>
<dbReference type="PATRIC" id="fig|160488.4.peg.1521"/>
<dbReference type="eggNOG" id="COG0571">
    <property type="taxonomic scope" value="Bacteria"/>
</dbReference>
<dbReference type="HOGENOM" id="CLU_000907_1_1_6"/>
<dbReference type="OrthoDB" id="9805026at2"/>
<dbReference type="PhylomeDB" id="Q88MY5"/>
<dbReference type="BioCyc" id="PPUT160488:G1G01-1525-MONOMER"/>
<dbReference type="Proteomes" id="UP000000556">
    <property type="component" value="Chromosome"/>
</dbReference>
<dbReference type="GO" id="GO:0005737">
    <property type="term" value="C:cytoplasm"/>
    <property type="evidence" value="ECO:0007669"/>
    <property type="project" value="UniProtKB-SubCell"/>
</dbReference>
<dbReference type="GO" id="GO:0003725">
    <property type="term" value="F:double-stranded RNA binding"/>
    <property type="evidence" value="ECO:0007669"/>
    <property type="project" value="TreeGrafter"/>
</dbReference>
<dbReference type="GO" id="GO:0046872">
    <property type="term" value="F:metal ion binding"/>
    <property type="evidence" value="ECO:0007669"/>
    <property type="project" value="UniProtKB-KW"/>
</dbReference>
<dbReference type="GO" id="GO:0004525">
    <property type="term" value="F:ribonuclease III activity"/>
    <property type="evidence" value="ECO:0007669"/>
    <property type="project" value="UniProtKB-UniRule"/>
</dbReference>
<dbReference type="GO" id="GO:0019843">
    <property type="term" value="F:rRNA binding"/>
    <property type="evidence" value="ECO:0007669"/>
    <property type="project" value="UniProtKB-KW"/>
</dbReference>
<dbReference type="GO" id="GO:0006397">
    <property type="term" value="P:mRNA processing"/>
    <property type="evidence" value="ECO:0007669"/>
    <property type="project" value="UniProtKB-UniRule"/>
</dbReference>
<dbReference type="GO" id="GO:0010468">
    <property type="term" value="P:regulation of gene expression"/>
    <property type="evidence" value="ECO:0007669"/>
    <property type="project" value="TreeGrafter"/>
</dbReference>
<dbReference type="GO" id="GO:0006364">
    <property type="term" value="P:rRNA processing"/>
    <property type="evidence" value="ECO:0007669"/>
    <property type="project" value="UniProtKB-UniRule"/>
</dbReference>
<dbReference type="GO" id="GO:0008033">
    <property type="term" value="P:tRNA processing"/>
    <property type="evidence" value="ECO:0007669"/>
    <property type="project" value="UniProtKB-KW"/>
</dbReference>
<dbReference type="CDD" id="cd10845">
    <property type="entry name" value="DSRM_RNAse_III_family"/>
    <property type="match status" value="1"/>
</dbReference>
<dbReference type="CDD" id="cd00593">
    <property type="entry name" value="RIBOc"/>
    <property type="match status" value="1"/>
</dbReference>
<dbReference type="FunFam" id="1.10.1520.10:FF:000001">
    <property type="entry name" value="Ribonuclease 3"/>
    <property type="match status" value="1"/>
</dbReference>
<dbReference type="FunFam" id="3.30.160.20:FF:000003">
    <property type="entry name" value="Ribonuclease 3"/>
    <property type="match status" value="1"/>
</dbReference>
<dbReference type="Gene3D" id="3.30.160.20">
    <property type="match status" value="1"/>
</dbReference>
<dbReference type="Gene3D" id="1.10.1520.10">
    <property type="entry name" value="Ribonuclease III domain"/>
    <property type="match status" value="1"/>
</dbReference>
<dbReference type="HAMAP" id="MF_00104">
    <property type="entry name" value="RNase_III"/>
    <property type="match status" value="1"/>
</dbReference>
<dbReference type="InterPro" id="IPR014720">
    <property type="entry name" value="dsRBD_dom"/>
</dbReference>
<dbReference type="InterPro" id="IPR011907">
    <property type="entry name" value="RNase_III"/>
</dbReference>
<dbReference type="InterPro" id="IPR000999">
    <property type="entry name" value="RNase_III_dom"/>
</dbReference>
<dbReference type="InterPro" id="IPR036389">
    <property type="entry name" value="RNase_III_sf"/>
</dbReference>
<dbReference type="NCBIfam" id="TIGR02191">
    <property type="entry name" value="RNaseIII"/>
    <property type="match status" value="1"/>
</dbReference>
<dbReference type="PANTHER" id="PTHR11207:SF0">
    <property type="entry name" value="RIBONUCLEASE 3"/>
    <property type="match status" value="1"/>
</dbReference>
<dbReference type="PANTHER" id="PTHR11207">
    <property type="entry name" value="RIBONUCLEASE III"/>
    <property type="match status" value="1"/>
</dbReference>
<dbReference type="Pfam" id="PF00035">
    <property type="entry name" value="dsrm"/>
    <property type="match status" value="1"/>
</dbReference>
<dbReference type="Pfam" id="PF14622">
    <property type="entry name" value="Ribonucleas_3_3"/>
    <property type="match status" value="1"/>
</dbReference>
<dbReference type="SMART" id="SM00358">
    <property type="entry name" value="DSRM"/>
    <property type="match status" value="1"/>
</dbReference>
<dbReference type="SMART" id="SM00535">
    <property type="entry name" value="RIBOc"/>
    <property type="match status" value="1"/>
</dbReference>
<dbReference type="SUPFAM" id="SSF54768">
    <property type="entry name" value="dsRNA-binding domain-like"/>
    <property type="match status" value="1"/>
</dbReference>
<dbReference type="SUPFAM" id="SSF69065">
    <property type="entry name" value="RNase III domain-like"/>
    <property type="match status" value="1"/>
</dbReference>
<dbReference type="PROSITE" id="PS50137">
    <property type="entry name" value="DS_RBD"/>
    <property type="match status" value="1"/>
</dbReference>
<dbReference type="PROSITE" id="PS00517">
    <property type="entry name" value="RNASE_3_1"/>
    <property type="match status" value="1"/>
</dbReference>
<dbReference type="PROSITE" id="PS50142">
    <property type="entry name" value="RNASE_3_2"/>
    <property type="match status" value="1"/>
</dbReference>
<comment type="function">
    <text evidence="1">Digests double-stranded RNA. Involved in the processing of primary rRNA transcript to yield the immediate precursors to the large and small rRNAs (23S and 16S). Processes some mRNAs, and tRNAs when they are encoded in the rRNA operon. Processes pre-crRNA and tracrRNA of type II CRISPR loci if present in the organism.</text>
</comment>
<comment type="catalytic activity">
    <reaction evidence="1">
        <text>Endonucleolytic cleavage to 5'-phosphomonoester.</text>
        <dbReference type="EC" id="3.1.26.3"/>
    </reaction>
</comment>
<comment type="cofactor">
    <cofactor evidence="1">
        <name>Mg(2+)</name>
        <dbReference type="ChEBI" id="CHEBI:18420"/>
    </cofactor>
</comment>
<comment type="subunit">
    <text evidence="1">Homodimer.</text>
</comment>
<comment type="subcellular location">
    <subcellularLocation>
        <location evidence="1">Cytoplasm</location>
    </subcellularLocation>
</comment>
<comment type="similarity">
    <text evidence="1">Belongs to the ribonuclease III family.</text>
</comment>
<sequence>MSASLAGLERKLGYTFKNQDQMLLALTHRSYAGRNNERLEFLGDAILNFVAGEALFERFPQAREGQLSRLRARLVKGETLARLARGFDLGDYLRLGSGELKSGGFRRESILADALEALIGAIYLDADMDTARERILAWLADEFEGLTLVDTNKDPKTRLQEFLQSRSCELPRYEVVDIQGEPHCRTFFVECEVVLLNNKSRGQGVSRRIAEQVAAASALIALGVENGND</sequence>
<accession>Q88MY5</accession>
<name>RNC_PSEPK</name>
<feature type="chain" id="PRO_0000180420" description="Ribonuclease 3">
    <location>
        <begin position="1"/>
        <end position="229"/>
    </location>
</feature>
<feature type="domain" description="RNase III" evidence="1">
    <location>
        <begin position="5"/>
        <end position="127"/>
    </location>
</feature>
<feature type="domain" description="DRBM" evidence="1">
    <location>
        <begin position="154"/>
        <end position="224"/>
    </location>
</feature>
<feature type="active site" evidence="1">
    <location>
        <position position="44"/>
    </location>
</feature>
<feature type="active site" evidence="1">
    <location>
        <position position="116"/>
    </location>
</feature>
<feature type="binding site" evidence="1">
    <location>
        <position position="40"/>
    </location>
    <ligand>
        <name>Mg(2+)</name>
        <dbReference type="ChEBI" id="CHEBI:18420"/>
    </ligand>
</feature>
<feature type="binding site" evidence="1">
    <location>
        <position position="113"/>
    </location>
    <ligand>
        <name>Mg(2+)</name>
        <dbReference type="ChEBI" id="CHEBI:18420"/>
    </ligand>
</feature>
<feature type="binding site" evidence="1">
    <location>
        <position position="116"/>
    </location>
    <ligand>
        <name>Mg(2+)</name>
        <dbReference type="ChEBI" id="CHEBI:18420"/>
    </ligand>
</feature>
<organism>
    <name type="scientific">Pseudomonas putida (strain ATCC 47054 / DSM 6125 / CFBP 8728 / NCIMB 11950 / KT2440)</name>
    <dbReference type="NCBI Taxonomy" id="160488"/>
    <lineage>
        <taxon>Bacteria</taxon>
        <taxon>Pseudomonadati</taxon>
        <taxon>Pseudomonadota</taxon>
        <taxon>Gammaproteobacteria</taxon>
        <taxon>Pseudomonadales</taxon>
        <taxon>Pseudomonadaceae</taxon>
        <taxon>Pseudomonas</taxon>
    </lineage>
</organism>
<gene>
    <name evidence="1" type="primary">rnc</name>
    <name type="ordered locus">PP_1433</name>
</gene>
<proteinExistence type="inferred from homology"/>
<evidence type="ECO:0000255" key="1">
    <source>
        <dbReference type="HAMAP-Rule" id="MF_00104"/>
    </source>
</evidence>
<protein>
    <recommendedName>
        <fullName evidence="1">Ribonuclease 3</fullName>
        <ecNumber evidence="1">3.1.26.3</ecNumber>
    </recommendedName>
    <alternativeName>
        <fullName evidence="1">Ribonuclease III</fullName>
        <shortName evidence="1">RNase III</shortName>
    </alternativeName>
</protein>
<reference key="1">
    <citation type="journal article" date="2002" name="Environ. Microbiol.">
        <title>Complete genome sequence and comparative analysis of the metabolically versatile Pseudomonas putida KT2440.</title>
        <authorList>
            <person name="Nelson K.E."/>
            <person name="Weinel C."/>
            <person name="Paulsen I.T."/>
            <person name="Dodson R.J."/>
            <person name="Hilbert H."/>
            <person name="Martins dos Santos V.A.P."/>
            <person name="Fouts D.E."/>
            <person name="Gill S.R."/>
            <person name="Pop M."/>
            <person name="Holmes M."/>
            <person name="Brinkac L.M."/>
            <person name="Beanan M.J."/>
            <person name="DeBoy R.T."/>
            <person name="Daugherty S.C."/>
            <person name="Kolonay J.F."/>
            <person name="Madupu R."/>
            <person name="Nelson W.C."/>
            <person name="White O."/>
            <person name="Peterson J.D."/>
            <person name="Khouri H.M."/>
            <person name="Hance I."/>
            <person name="Chris Lee P."/>
            <person name="Holtzapple E.K."/>
            <person name="Scanlan D."/>
            <person name="Tran K."/>
            <person name="Moazzez A."/>
            <person name="Utterback T.R."/>
            <person name="Rizzo M."/>
            <person name="Lee K."/>
            <person name="Kosack D."/>
            <person name="Moestl D."/>
            <person name="Wedler H."/>
            <person name="Lauber J."/>
            <person name="Stjepandic D."/>
            <person name="Hoheisel J."/>
            <person name="Straetz M."/>
            <person name="Heim S."/>
            <person name="Kiewitz C."/>
            <person name="Eisen J.A."/>
            <person name="Timmis K.N."/>
            <person name="Duesterhoeft A."/>
            <person name="Tuemmler B."/>
            <person name="Fraser C.M."/>
        </authorList>
    </citation>
    <scope>NUCLEOTIDE SEQUENCE [LARGE SCALE GENOMIC DNA]</scope>
    <source>
        <strain>ATCC 47054 / DSM 6125 / CFBP 8728 / NCIMB 11950 / KT2440</strain>
    </source>
</reference>